<keyword id="KW-0131">Cell cycle</keyword>
<keyword id="KW-0132">Cell division</keyword>
<keyword id="KW-0133">Cell shape</keyword>
<keyword id="KW-0961">Cell wall biogenesis/degradation</keyword>
<keyword id="KW-0963">Cytoplasm</keyword>
<keyword id="KW-0573">Peptidoglycan synthesis</keyword>
<keyword id="KW-0670">Pyruvate</keyword>
<keyword id="KW-0808">Transferase</keyword>
<dbReference type="EC" id="2.5.1.7" evidence="1"/>
<dbReference type="EMBL" id="CP000124">
    <property type="protein sequence ID" value="ABA48016.1"/>
    <property type="molecule type" value="Genomic_DNA"/>
</dbReference>
<dbReference type="RefSeq" id="WP_004527889.1">
    <property type="nucleotide sequence ID" value="NC_007434.1"/>
</dbReference>
<dbReference type="SMR" id="Q3JMZ4"/>
<dbReference type="EnsemblBacteria" id="ABA48016">
    <property type="protein sequence ID" value="ABA48016"/>
    <property type="gene ID" value="BURPS1710b_3695"/>
</dbReference>
<dbReference type="KEGG" id="bpm:BURPS1710b_3695"/>
<dbReference type="HOGENOM" id="CLU_027387_0_0_4"/>
<dbReference type="UniPathway" id="UPA00219"/>
<dbReference type="Proteomes" id="UP000002700">
    <property type="component" value="Chromosome I"/>
</dbReference>
<dbReference type="GO" id="GO:0005737">
    <property type="term" value="C:cytoplasm"/>
    <property type="evidence" value="ECO:0007669"/>
    <property type="project" value="UniProtKB-SubCell"/>
</dbReference>
<dbReference type="GO" id="GO:0008760">
    <property type="term" value="F:UDP-N-acetylglucosamine 1-carboxyvinyltransferase activity"/>
    <property type="evidence" value="ECO:0007669"/>
    <property type="project" value="UniProtKB-UniRule"/>
</dbReference>
<dbReference type="GO" id="GO:0051301">
    <property type="term" value="P:cell division"/>
    <property type="evidence" value="ECO:0007669"/>
    <property type="project" value="UniProtKB-KW"/>
</dbReference>
<dbReference type="GO" id="GO:0071555">
    <property type="term" value="P:cell wall organization"/>
    <property type="evidence" value="ECO:0007669"/>
    <property type="project" value="UniProtKB-KW"/>
</dbReference>
<dbReference type="GO" id="GO:0009252">
    <property type="term" value="P:peptidoglycan biosynthetic process"/>
    <property type="evidence" value="ECO:0007669"/>
    <property type="project" value="UniProtKB-UniRule"/>
</dbReference>
<dbReference type="GO" id="GO:0008360">
    <property type="term" value="P:regulation of cell shape"/>
    <property type="evidence" value="ECO:0007669"/>
    <property type="project" value="UniProtKB-KW"/>
</dbReference>
<dbReference type="GO" id="GO:0019277">
    <property type="term" value="P:UDP-N-acetylgalactosamine biosynthetic process"/>
    <property type="evidence" value="ECO:0007669"/>
    <property type="project" value="InterPro"/>
</dbReference>
<dbReference type="CDD" id="cd01555">
    <property type="entry name" value="UdpNAET"/>
    <property type="match status" value="1"/>
</dbReference>
<dbReference type="FunFam" id="3.65.10.10:FF:000001">
    <property type="entry name" value="UDP-N-acetylglucosamine 1-carboxyvinyltransferase"/>
    <property type="match status" value="1"/>
</dbReference>
<dbReference type="Gene3D" id="3.65.10.10">
    <property type="entry name" value="Enolpyruvate transferase domain"/>
    <property type="match status" value="2"/>
</dbReference>
<dbReference type="HAMAP" id="MF_00111">
    <property type="entry name" value="MurA"/>
    <property type="match status" value="1"/>
</dbReference>
<dbReference type="InterPro" id="IPR001986">
    <property type="entry name" value="Enolpyruvate_Tfrase_dom"/>
</dbReference>
<dbReference type="InterPro" id="IPR036968">
    <property type="entry name" value="Enolpyruvate_Tfrase_sf"/>
</dbReference>
<dbReference type="InterPro" id="IPR050068">
    <property type="entry name" value="MurA_subfamily"/>
</dbReference>
<dbReference type="InterPro" id="IPR013792">
    <property type="entry name" value="RNA3'P_cycl/enolpyr_Trfase_a/b"/>
</dbReference>
<dbReference type="InterPro" id="IPR005750">
    <property type="entry name" value="UDP_GlcNAc_COvinyl_MurA"/>
</dbReference>
<dbReference type="NCBIfam" id="TIGR01072">
    <property type="entry name" value="murA"/>
    <property type="match status" value="1"/>
</dbReference>
<dbReference type="NCBIfam" id="NF006873">
    <property type="entry name" value="PRK09369.1"/>
    <property type="match status" value="1"/>
</dbReference>
<dbReference type="PANTHER" id="PTHR43783">
    <property type="entry name" value="UDP-N-ACETYLGLUCOSAMINE 1-CARBOXYVINYLTRANSFERASE"/>
    <property type="match status" value="1"/>
</dbReference>
<dbReference type="PANTHER" id="PTHR43783:SF1">
    <property type="entry name" value="UDP-N-ACETYLGLUCOSAMINE 1-CARBOXYVINYLTRANSFERASE"/>
    <property type="match status" value="1"/>
</dbReference>
<dbReference type="Pfam" id="PF00275">
    <property type="entry name" value="EPSP_synthase"/>
    <property type="match status" value="1"/>
</dbReference>
<dbReference type="SUPFAM" id="SSF55205">
    <property type="entry name" value="EPT/RTPC-like"/>
    <property type="match status" value="1"/>
</dbReference>
<reference key="1">
    <citation type="journal article" date="2010" name="Genome Biol. Evol.">
        <title>Continuing evolution of Burkholderia mallei through genome reduction and large-scale rearrangements.</title>
        <authorList>
            <person name="Losada L."/>
            <person name="Ronning C.M."/>
            <person name="DeShazer D."/>
            <person name="Woods D."/>
            <person name="Fedorova N."/>
            <person name="Kim H.S."/>
            <person name="Shabalina S.A."/>
            <person name="Pearson T.R."/>
            <person name="Brinkac L."/>
            <person name="Tan P."/>
            <person name="Nandi T."/>
            <person name="Crabtree J."/>
            <person name="Badger J."/>
            <person name="Beckstrom-Sternberg S."/>
            <person name="Saqib M."/>
            <person name="Schutzer S.E."/>
            <person name="Keim P."/>
            <person name="Nierman W.C."/>
        </authorList>
    </citation>
    <scope>NUCLEOTIDE SEQUENCE [LARGE SCALE GENOMIC DNA]</scope>
    <source>
        <strain>1710b</strain>
    </source>
</reference>
<evidence type="ECO:0000255" key="1">
    <source>
        <dbReference type="HAMAP-Rule" id="MF_00111"/>
    </source>
</evidence>
<evidence type="ECO:0000256" key="2">
    <source>
        <dbReference type="SAM" id="MobiDB-lite"/>
    </source>
</evidence>
<sequence>MQVTVNEHDAVERVATATPAGNREAHAHGTDKLAIEGGRRLAGEIAVSGAKNAALPILCAGLLSAEPVRLDNVPDLKDVRTTLALLGQMGMREETDGARVVLDASRVDNPVAPYELVKTMRASILVLGPLLARFGYAKVSLPGGCAIGARPVDQHIKGLQAMGAEIHIEHGYIEARAKRLSGARIVTDMITVTGTENLLMAATLADGETVIENAAREPEVTDLAHLLVAMGAKIDGIGTDRLVIQGVERLHGATHAVIPDRIEAGTFLCAVAAAGGDVTLTGMRAHILDAVIDKLREAGATIDEGVDTLRVRMDGRPSAVAIRTSEYPAFPTDMQAQFMALNAVAQGAAQVTETIFENRFMHVQELNRLGANIAVDGNTALVTGVPKLSGASVMATDLRASASLVIAGLCAQGETLVERIYHLDRGYDRMETKLTAVGANVRRISGSEA</sequence>
<protein>
    <recommendedName>
        <fullName evidence="1">UDP-N-acetylglucosamine 1-carboxyvinyltransferase</fullName>
        <ecNumber evidence="1">2.5.1.7</ecNumber>
    </recommendedName>
    <alternativeName>
        <fullName evidence="1">Enoylpyruvate transferase</fullName>
    </alternativeName>
    <alternativeName>
        <fullName evidence="1">UDP-N-acetylglucosamine enolpyruvyl transferase</fullName>
        <shortName evidence="1">EPT</shortName>
    </alternativeName>
</protein>
<comment type="function">
    <text evidence="1">Cell wall formation. Adds enolpyruvyl to UDP-N-acetylglucosamine.</text>
</comment>
<comment type="catalytic activity">
    <reaction evidence="1">
        <text>phosphoenolpyruvate + UDP-N-acetyl-alpha-D-glucosamine = UDP-N-acetyl-3-O-(1-carboxyvinyl)-alpha-D-glucosamine + phosphate</text>
        <dbReference type="Rhea" id="RHEA:18681"/>
        <dbReference type="ChEBI" id="CHEBI:43474"/>
        <dbReference type="ChEBI" id="CHEBI:57705"/>
        <dbReference type="ChEBI" id="CHEBI:58702"/>
        <dbReference type="ChEBI" id="CHEBI:68483"/>
        <dbReference type="EC" id="2.5.1.7"/>
    </reaction>
</comment>
<comment type="pathway">
    <text evidence="1">Cell wall biogenesis; peptidoglycan biosynthesis.</text>
</comment>
<comment type="subcellular location">
    <subcellularLocation>
        <location evidence="1">Cytoplasm</location>
    </subcellularLocation>
</comment>
<comment type="similarity">
    <text evidence="1">Belongs to the EPSP synthase family. MurA subfamily.</text>
</comment>
<feature type="chain" id="PRO_0000231183" description="UDP-N-acetylglucosamine 1-carboxyvinyltransferase">
    <location>
        <begin position="1"/>
        <end position="449"/>
    </location>
</feature>
<feature type="region of interest" description="Disordered" evidence="2">
    <location>
        <begin position="1"/>
        <end position="30"/>
    </location>
</feature>
<feature type="compositionally biased region" description="Basic and acidic residues" evidence="2">
    <location>
        <begin position="1"/>
        <end position="12"/>
    </location>
</feature>
<feature type="active site" description="Proton donor" evidence="1">
    <location>
        <position position="145"/>
    </location>
</feature>
<feature type="binding site" evidence="1">
    <location>
        <begin position="51"/>
        <end position="52"/>
    </location>
    <ligand>
        <name>phosphoenolpyruvate</name>
        <dbReference type="ChEBI" id="CHEBI:58702"/>
    </ligand>
</feature>
<feature type="binding site" evidence="1">
    <location>
        <position position="121"/>
    </location>
    <ligand>
        <name>UDP-N-acetyl-alpha-D-glucosamine</name>
        <dbReference type="ChEBI" id="CHEBI:57705"/>
    </ligand>
</feature>
<feature type="binding site" evidence="1">
    <location>
        <begin position="150"/>
        <end position="154"/>
    </location>
    <ligand>
        <name>UDP-N-acetyl-alpha-D-glucosamine</name>
        <dbReference type="ChEBI" id="CHEBI:57705"/>
    </ligand>
</feature>
<feature type="binding site" evidence="1">
    <location>
        <position position="333"/>
    </location>
    <ligand>
        <name>UDP-N-acetyl-alpha-D-glucosamine</name>
        <dbReference type="ChEBI" id="CHEBI:57705"/>
    </ligand>
</feature>
<feature type="binding site" evidence="1">
    <location>
        <position position="355"/>
    </location>
    <ligand>
        <name>UDP-N-acetyl-alpha-D-glucosamine</name>
        <dbReference type="ChEBI" id="CHEBI:57705"/>
    </ligand>
</feature>
<feature type="modified residue" description="2-(S-cysteinyl)pyruvic acid O-phosphothioketal" evidence="1">
    <location>
        <position position="145"/>
    </location>
</feature>
<proteinExistence type="inferred from homology"/>
<gene>
    <name evidence="1" type="primary">murA</name>
    <name type="ordered locus">BURPS1710b_3695</name>
</gene>
<name>MURA_BURP1</name>
<accession>Q3JMZ4</accession>
<organism>
    <name type="scientific">Burkholderia pseudomallei (strain 1710b)</name>
    <dbReference type="NCBI Taxonomy" id="320372"/>
    <lineage>
        <taxon>Bacteria</taxon>
        <taxon>Pseudomonadati</taxon>
        <taxon>Pseudomonadota</taxon>
        <taxon>Betaproteobacteria</taxon>
        <taxon>Burkholderiales</taxon>
        <taxon>Burkholderiaceae</taxon>
        <taxon>Burkholderia</taxon>
        <taxon>pseudomallei group</taxon>
    </lineage>
</organism>